<dbReference type="EC" id="5.2.1.8" evidence="1"/>
<dbReference type="EMBL" id="AE009442">
    <property type="protein sequence ID" value="AAO29667.1"/>
    <property type="molecule type" value="Genomic_DNA"/>
</dbReference>
<dbReference type="RefSeq" id="WP_004088162.1">
    <property type="nucleotide sequence ID" value="NC_004556.1"/>
</dbReference>
<dbReference type="SMR" id="Q87AJ0"/>
<dbReference type="KEGG" id="xft:PD_1835"/>
<dbReference type="HOGENOM" id="CLU_034646_11_0_6"/>
<dbReference type="Proteomes" id="UP000002516">
    <property type="component" value="Chromosome"/>
</dbReference>
<dbReference type="GO" id="GO:0030288">
    <property type="term" value="C:outer membrane-bounded periplasmic space"/>
    <property type="evidence" value="ECO:0007669"/>
    <property type="project" value="InterPro"/>
</dbReference>
<dbReference type="GO" id="GO:0042277">
    <property type="term" value="F:peptide binding"/>
    <property type="evidence" value="ECO:0007669"/>
    <property type="project" value="InterPro"/>
</dbReference>
<dbReference type="GO" id="GO:0003755">
    <property type="term" value="F:peptidyl-prolyl cis-trans isomerase activity"/>
    <property type="evidence" value="ECO:0007669"/>
    <property type="project" value="UniProtKB-UniRule"/>
</dbReference>
<dbReference type="GO" id="GO:0051082">
    <property type="term" value="F:unfolded protein binding"/>
    <property type="evidence" value="ECO:0007669"/>
    <property type="project" value="UniProtKB-UniRule"/>
</dbReference>
<dbReference type="GO" id="GO:0043165">
    <property type="term" value="P:Gram-negative-bacterium-type cell outer membrane assembly"/>
    <property type="evidence" value="ECO:0007669"/>
    <property type="project" value="InterPro"/>
</dbReference>
<dbReference type="GO" id="GO:0006457">
    <property type="term" value="P:protein folding"/>
    <property type="evidence" value="ECO:0007669"/>
    <property type="project" value="UniProtKB-UniRule"/>
</dbReference>
<dbReference type="GO" id="GO:0050821">
    <property type="term" value="P:protein stabilization"/>
    <property type="evidence" value="ECO:0007669"/>
    <property type="project" value="InterPro"/>
</dbReference>
<dbReference type="Gene3D" id="3.10.50.40">
    <property type="match status" value="2"/>
</dbReference>
<dbReference type="Gene3D" id="1.10.4030.10">
    <property type="entry name" value="Porin chaperone SurA, peptide-binding domain"/>
    <property type="match status" value="1"/>
</dbReference>
<dbReference type="HAMAP" id="MF_01183">
    <property type="entry name" value="Chaperone_SurA"/>
    <property type="match status" value="1"/>
</dbReference>
<dbReference type="InterPro" id="IPR050280">
    <property type="entry name" value="OMP_Chaperone_SurA"/>
</dbReference>
<dbReference type="InterPro" id="IPR046357">
    <property type="entry name" value="PPIase_dom_sf"/>
</dbReference>
<dbReference type="InterPro" id="IPR000297">
    <property type="entry name" value="PPIase_PpiC"/>
</dbReference>
<dbReference type="InterPro" id="IPR023034">
    <property type="entry name" value="PPIase_SurA"/>
</dbReference>
<dbReference type="InterPro" id="IPR015391">
    <property type="entry name" value="SurA_N"/>
</dbReference>
<dbReference type="InterPro" id="IPR027304">
    <property type="entry name" value="Trigger_fact/SurA_dom_sf"/>
</dbReference>
<dbReference type="PANTHER" id="PTHR47637">
    <property type="entry name" value="CHAPERONE SURA"/>
    <property type="match status" value="1"/>
</dbReference>
<dbReference type="PANTHER" id="PTHR47637:SF1">
    <property type="entry name" value="CHAPERONE SURA"/>
    <property type="match status" value="1"/>
</dbReference>
<dbReference type="Pfam" id="PF00639">
    <property type="entry name" value="Rotamase"/>
    <property type="match status" value="1"/>
</dbReference>
<dbReference type="Pfam" id="PF13616">
    <property type="entry name" value="Rotamase_3"/>
    <property type="match status" value="1"/>
</dbReference>
<dbReference type="Pfam" id="PF09312">
    <property type="entry name" value="SurA_N"/>
    <property type="match status" value="1"/>
</dbReference>
<dbReference type="SUPFAM" id="SSF54534">
    <property type="entry name" value="FKBP-like"/>
    <property type="match status" value="2"/>
</dbReference>
<dbReference type="SUPFAM" id="SSF109998">
    <property type="entry name" value="Triger factor/SurA peptide-binding domain-like"/>
    <property type="match status" value="1"/>
</dbReference>
<dbReference type="PROSITE" id="PS50198">
    <property type="entry name" value="PPIC_PPIASE_2"/>
    <property type="match status" value="2"/>
</dbReference>
<gene>
    <name evidence="1" type="primary">surA</name>
    <name type="ordered locus">PD_1835</name>
</gene>
<proteinExistence type="inferred from homology"/>
<comment type="function">
    <text evidence="1">Chaperone involved in the correct folding and assembly of outer membrane proteins. Recognizes specific patterns of aromatic residues and the orientation of their side chains, which are found more frequently in integral outer membrane proteins. May act in both early periplasmic and late outer membrane-associated steps of protein maturation.</text>
</comment>
<comment type="catalytic activity">
    <reaction evidence="1">
        <text>[protein]-peptidylproline (omega=180) = [protein]-peptidylproline (omega=0)</text>
        <dbReference type="Rhea" id="RHEA:16237"/>
        <dbReference type="Rhea" id="RHEA-COMP:10747"/>
        <dbReference type="Rhea" id="RHEA-COMP:10748"/>
        <dbReference type="ChEBI" id="CHEBI:83833"/>
        <dbReference type="ChEBI" id="CHEBI:83834"/>
        <dbReference type="EC" id="5.2.1.8"/>
    </reaction>
</comment>
<comment type="subcellular location">
    <subcellularLocation>
        <location evidence="1">Periplasm</location>
    </subcellularLocation>
    <text evidence="1">Is capable of associating with the outer membrane.</text>
</comment>
<comment type="domain">
    <text evidence="1">The PPIase activity resides only in the second parvulin domain. The N-terminal region and the C-terminal tail are necessary and sufficient for the chaperone activity of SurA. The PPIase activity is dispensable for SurA to function as a chaperone. The N-terminal region and the C-terminal tail are also required for porin recognition.</text>
</comment>
<feature type="signal peptide" evidence="1">
    <location>
        <begin position="1"/>
        <end position="25"/>
    </location>
</feature>
<feature type="chain" id="PRO_0000270054" description="Chaperone SurA">
    <location>
        <begin position="26"/>
        <end position="463"/>
    </location>
</feature>
<feature type="domain" description="PpiC 1" evidence="1">
    <location>
        <begin position="175"/>
        <end position="277"/>
    </location>
</feature>
<feature type="domain" description="PpiC 2" evidence="1">
    <location>
        <begin position="291"/>
        <end position="390"/>
    </location>
</feature>
<feature type="region of interest" description="Disordered" evidence="2">
    <location>
        <begin position="439"/>
        <end position="463"/>
    </location>
</feature>
<reference key="1">
    <citation type="journal article" date="2003" name="J. Bacteriol.">
        <title>Comparative analyses of the complete genome sequences of Pierce's disease and citrus variegated chlorosis strains of Xylella fastidiosa.</title>
        <authorList>
            <person name="Van Sluys M.A."/>
            <person name="de Oliveira M.C."/>
            <person name="Monteiro-Vitorello C.B."/>
            <person name="Miyaki C.Y."/>
            <person name="Furlan L.R."/>
            <person name="Camargo L.E.A."/>
            <person name="da Silva A.C.R."/>
            <person name="Moon D.H."/>
            <person name="Takita M.A."/>
            <person name="Lemos E.G.M."/>
            <person name="Machado M.A."/>
            <person name="Ferro M.I.T."/>
            <person name="da Silva F.R."/>
            <person name="Goldman M.H.S."/>
            <person name="Goldman G.H."/>
            <person name="Lemos M.V.F."/>
            <person name="El-Dorry H."/>
            <person name="Tsai S.M."/>
            <person name="Carrer H."/>
            <person name="Carraro D.M."/>
            <person name="de Oliveira R.C."/>
            <person name="Nunes L.R."/>
            <person name="Siqueira W.J."/>
            <person name="Coutinho L.L."/>
            <person name="Kimura E.T."/>
            <person name="Ferro E.S."/>
            <person name="Harakava R."/>
            <person name="Kuramae E.E."/>
            <person name="Marino C.L."/>
            <person name="Giglioti E."/>
            <person name="Abreu I.L."/>
            <person name="Alves L.M.C."/>
            <person name="do Amaral A.M."/>
            <person name="Baia G.S."/>
            <person name="Blanco S.R."/>
            <person name="Brito M.S."/>
            <person name="Cannavan F.S."/>
            <person name="Celestino A.V."/>
            <person name="da Cunha A.F."/>
            <person name="Fenille R.C."/>
            <person name="Ferro J.A."/>
            <person name="Formighieri E.F."/>
            <person name="Kishi L.T."/>
            <person name="Leoni S.G."/>
            <person name="Oliveira A.R."/>
            <person name="Rosa V.E. Jr."/>
            <person name="Sassaki F.T."/>
            <person name="Sena J.A.D."/>
            <person name="de Souza A.A."/>
            <person name="Truffi D."/>
            <person name="Tsukumo F."/>
            <person name="Yanai G.M."/>
            <person name="Zaros L.G."/>
            <person name="Civerolo E.L."/>
            <person name="Simpson A.J.G."/>
            <person name="Almeida N.F. Jr."/>
            <person name="Setubal J.C."/>
            <person name="Kitajima J.P."/>
        </authorList>
    </citation>
    <scope>NUCLEOTIDE SEQUENCE [LARGE SCALE GENOMIC DNA]</scope>
    <source>
        <strain>Temecula1 / ATCC 700964</strain>
    </source>
</reference>
<name>SURA_XYLFT</name>
<protein>
    <recommendedName>
        <fullName evidence="1">Chaperone SurA</fullName>
    </recommendedName>
    <alternativeName>
        <fullName evidence="1">Peptidyl-prolyl cis-trans isomerase SurA</fullName>
        <shortName evidence="1">PPIase SurA</shortName>
        <ecNumber evidence="1">5.2.1.8</ecNumber>
    </alternativeName>
    <alternativeName>
        <fullName evidence="1">Rotamase SurA</fullName>
    </alternativeName>
</protein>
<organism>
    <name type="scientific">Xylella fastidiosa (strain Temecula1 / ATCC 700964)</name>
    <dbReference type="NCBI Taxonomy" id="183190"/>
    <lineage>
        <taxon>Bacteria</taxon>
        <taxon>Pseudomonadati</taxon>
        <taxon>Pseudomonadota</taxon>
        <taxon>Gammaproteobacteria</taxon>
        <taxon>Lysobacterales</taxon>
        <taxon>Lysobacteraceae</taxon>
        <taxon>Xylella</taxon>
    </lineage>
</organism>
<keyword id="KW-0143">Chaperone</keyword>
<keyword id="KW-0413">Isomerase</keyword>
<keyword id="KW-0574">Periplasm</keyword>
<keyword id="KW-1185">Reference proteome</keyword>
<keyword id="KW-0677">Repeat</keyword>
<keyword id="KW-0697">Rotamase</keyword>
<keyword id="KW-0732">Signal</keyword>
<accession>Q87AJ0</accession>
<sequence>MTRYFSIVLSLLLAVSCVFLPVASARQQQHQPLDRIVAVVDDNVVLKSELDRAIHNVKSQYVGHEGQLPPDEVLQRQVLERLILIKLQVARAQTNGIRVSDDELNQAISSIAENNKTSVDGLRQKLVAEGISFPEFRQSVRDEITVHHLRQGFAQSRIVVSEGEVDTALAQANSGAQYHLQHILVSLPDGATSEQIAIAQKKINGIKSVIDKGELAFSAAAVRYSDSPNALESGDLGWRSLDEIPEAFAQMVQTMKPGQIVGPLRGTSGFQLLKLVEVRDSTAAAGPRQMATEYHARHILVRITDKQKEAQAKAKIDTLRARIAGGADFQTVARESSEDANNSNQGGDLGWFPSDAFGADFGNHVKALADGNVSEPFRSAAGWHIVQRLGTRQTDVTRENQRAQIRDTIGQRKLEESYERFLRELRSEAYVSLQIEEPADDHHTPSAAVTPATGAVLPAATKH</sequence>
<evidence type="ECO:0000255" key="1">
    <source>
        <dbReference type="HAMAP-Rule" id="MF_01183"/>
    </source>
</evidence>
<evidence type="ECO:0000256" key="2">
    <source>
        <dbReference type="SAM" id="MobiDB-lite"/>
    </source>
</evidence>